<feature type="chain" id="PRO_1000186872" description="LL-diaminopimelate aminotransferase">
    <location>
        <begin position="1"/>
        <end position="411"/>
    </location>
</feature>
<feature type="binding site" evidence="1">
    <location>
        <position position="15"/>
    </location>
    <ligand>
        <name>substrate</name>
    </ligand>
</feature>
<feature type="binding site" evidence="1">
    <location>
        <position position="42"/>
    </location>
    <ligand>
        <name>substrate</name>
    </ligand>
</feature>
<feature type="binding site" evidence="1">
    <location>
        <position position="72"/>
    </location>
    <ligand>
        <name>pyridoxal 5'-phosphate</name>
        <dbReference type="ChEBI" id="CHEBI:597326"/>
    </ligand>
</feature>
<feature type="binding site" evidence="1">
    <location>
        <begin position="108"/>
        <end position="109"/>
    </location>
    <ligand>
        <name>pyridoxal 5'-phosphate</name>
        <dbReference type="ChEBI" id="CHEBI:597326"/>
    </ligand>
</feature>
<feature type="binding site" evidence="1">
    <location>
        <position position="109"/>
    </location>
    <ligand>
        <name>substrate</name>
    </ligand>
</feature>
<feature type="binding site" evidence="1">
    <location>
        <position position="132"/>
    </location>
    <ligand>
        <name>pyridoxal 5'-phosphate</name>
        <dbReference type="ChEBI" id="CHEBI:597326"/>
    </ligand>
</feature>
<feature type="binding site" evidence="1">
    <location>
        <position position="132"/>
    </location>
    <ligand>
        <name>substrate</name>
    </ligand>
</feature>
<feature type="binding site" evidence="1">
    <location>
        <position position="187"/>
    </location>
    <ligand>
        <name>pyridoxal 5'-phosphate</name>
        <dbReference type="ChEBI" id="CHEBI:597326"/>
    </ligand>
</feature>
<feature type="binding site" evidence="1">
    <location>
        <position position="187"/>
    </location>
    <ligand>
        <name>substrate</name>
    </ligand>
</feature>
<feature type="binding site" evidence="1">
    <location>
        <position position="218"/>
    </location>
    <ligand>
        <name>pyridoxal 5'-phosphate</name>
        <dbReference type="ChEBI" id="CHEBI:597326"/>
    </ligand>
</feature>
<feature type="binding site" evidence="1">
    <location>
        <begin position="246"/>
        <end position="248"/>
    </location>
    <ligand>
        <name>pyridoxal 5'-phosphate</name>
        <dbReference type="ChEBI" id="CHEBI:597326"/>
    </ligand>
</feature>
<feature type="binding site" evidence="1">
    <location>
        <position position="257"/>
    </location>
    <ligand>
        <name>pyridoxal 5'-phosphate</name>
        <dbReference type="ChEBI" id="CHEBI:597326"/>
    </ligand>
</feature>
<feature type="binding site" evidence="1">
    <location>
        <position position="292"/>
    </location>
    <ligand>
        <name>pyridoxal 5'-phosphate</name>
        <dbReference type="ChEBI" id="CHEBI:597326"/>
    </ligand>
</feature>
<feature type="binding site" evidence="1">
    <location>
        <position position="292"/>
    </location>
    <ligand>
        <name>substrate</name>
    </ligand>
</feature>
<feature type="binding site" evidence="1">
    <location>
        <position position="388"/>
    </location>
    <ligand>
        <name>substrate</name>
    </ligand>
</feature>
<feature type="modified residue" description="N6-(pyridoxal phosphate)lysine" evidence="1">
    <location>
        <position position="249"/>
    </location>
</feature>
<accession>B2J2U3</accession>
<evidence type="ECO:0000255" key="1">
    <source>
        <dbReference type="HAMAP-Rule" id="MF_01642"/>
    </source>
</evidence>
<comment type="function">
    <text evidence="1">Involved in the synthesis of meso-diaminopimelate (m-DAP or DL-DAP), required for both lysine and peptidoglycan biosynthesis. Catalyzes the direct conversion of tetrahydrodipicolinate to LL-diaminopimelate.</text>
</comment>
<comment type="catalytic activity">
    <reaction evidence="1">
        <text>(2S,6S)-2,6-diaminopimelate + 2-oxoglutarate = (S)-2,3,4,5-tetrahydrodipicolinate + L-glutamate + H2O + H(+)</text>
        <dbReference type="Rhea" id="RHEA:23988"/>
        <dbReference type="ChEBI" id="CHEBI:15377"/>
        <dbReference type="ChEBI" id="CHEBI:15378"/>
        <dbReference type="ChEBI" id="CHEBI:16810"/>
        <dbReference type="ChEBI" id="CHEBI:16845"/>
        <dbReference type="ChEBI" id="CHEBI:29985"/>
        <dbReference type="ChEBI" id="CHEBI:57609"/>
        <dbReference type="EC" id="2.6.1.83"/>
    </reaction>
</comment>
<comment type="cofactor">
    <cofactor evidence="1">
        <name>pyridoxal 5'-phosphate</name>
        <dbReference type="ChEBI" id="CHEBI:597326"/>
    </cofactor>
</comment>
<comment type="pathway">
    <text evidence="1">Amino-acid biosynthesis; L-lysine biosynthesis via DAP pathway; LL-2,6-diaminopimelate from (S)-tetrahydrodipicolinate (aminotransferase route): step 1/1.</text>
</comment>
<comment type="subunit">
    <text evidence="1">Homodimer.</text>
</comment>
<comment type="similarity">
    <text evidence="1">Belongs to the class-I pyridoxal-phosphate-dependent aminotransferase family. LL-diaminopimelate aminotransferase subfamily.</text>
</comment>
<gene>
    <name evidence="1" type="primary">dapL</name>
    <name type="ordered locus">Npun_R3615</name>
</gene>
<sequence>MATINNNYLKLKAGYLFPEISRRVNAFAEANPDAKIIRLGIGDVTEPLPEACRTAMIKAVEDMGDRNTFKGYGPEQGYAWLREKIAAQDFQARGANIDASEIFISDGSKCDTGNILEIFGHDNLIAVTDPVYPVYVDTNVMVGNTGDANDKGEFEGLVYLPITADNNFTAEIPSKKVDLIYLCFPNNPTGATATKEYLKAWVDYAKANNSIIFFDAAYEAYITDPSIPHSIYEIEGAREVAIEFRSFSKNAGFTGTRCALTVVPKTLTGKAADGSDVELWKLWNRRQSTKFNGVSYIVQRGAEAVYSEEGQAQIKGLVSFYLENAKIIREKLTAAGLSVYGGVNAPYVWVKTPNGLSSWEFFDKLLQTVNVVGTPGSGFGAAGEGYFRISAFNSRENVEEAMKRITKKFKV</sequence>
<protein>
    <recommendedName>
        <fullName evidence="1">LL-diaminopimelate aminotransferase</fullName>
        <shortName evidence="1">DAP-AT</shortName>
        <shortName evidence="1">DAP-aminotransferase</shortName>
        <shortName evidence="1">LL-DAP-aminotransferase</shortName>
        <ecNumber evidence="1">2.6.1.83</ecNumber>
    </recommendedName>
</protein>
<keyword id="KW-0032">Aminotransferase</keyword>
<keyword id="KW-0663">Pyridoxal phosphate</keyword>
<keyword id="KW-1185">Reference proteome</keyword>
<keyword id="KW-0808">Transferase</keyword>
<dbReference type="EC" id="2.6.1.83" evidence="1"/>
<dbReference type="EMBL" id="CP001037">
    <property type="protein sequence ID" value="ACC82010.1"/>
    <property type="molecule type" value="Genomic_DNA"/>
</dbReference>
<dbReference type="RefSeq" id="WP_012409982.1">
    <property type="nucleotide sequence ID" value="NC_010628.1"/>
</dbReference>
<dbReference type="SMR" id="B2J2U3"/>
<dbReference type="STRING" id="63737.Npun_R3615"/>
<dbReference type="EnsemblBacteria" id="ACC82010">
    <property type="protein sequence ID" value="ACC82010"/>
    <property type="gene ID" value="Npun_R3615"/>
</dbReference>
<dbReference type="KEGG" id="npu:Npun_R3615"/>
<dbReference type="eggNOG" id="COG0436">
    <property type="taxonomic scope" value="Bacteria"/>
</dbReference>
<dbReference type="HOGENOM" id="CLU_051433_0_0_3"/>
<dbReference type="OrthoDB" id="9802328at2"/>
<dbReference type="PhylomeDB" id="B2J2U3"/>
<dbReference type="UniPathway" id="UPA00034">
    <property type="reaction ID" value="UER00466"/>
</dbReference>
<dbReference type="Proteomes" id="UP000001191">
    <property type="component" value="Chromosome"/>
</dbReference>
<dbReference type="GO" id="GO:0010285">
    <property type="term" value="F:L,L-diaminopimelate aminotransferase activity"/>
    <property type="evidence" value="ECO:0007669"/>
    <property type="project" value="UniProtKB-UniRule"/>
</dbReference>
<dbReference type="GO" id="GO:0030170">
    <property type="term" value="F:pyridoxal phosphate binding"/>
    <property type="evidence" value="ECO:0007669"/>
    <property type="project" value="UniProtKB-UniRule"/>
</dbReference>
<dbReference type="GO" id="GO:0033362">
    <property type="term" value="P:lysine biosynthetic process via diaminopimelate, diaminopimelate-aminotransferase pathway"/>
    <property type="evidence" value="ECO:0007669"/>
    <property type="project" value="UniProtKB-UniRule"/>
</dbReference>
<dbReference type="CDD" id="cd00609">
    <property type="entry name" value="AAT_like"/>
    <property type="match status" value="1"/>
</dbReference>
<dbReference type="FunFam" id="3.40.640.10:FF:000099">
    <property type="entry name" value="LL-diaminopimelate aminotransferase, chloroplastic"/>
    <property type="match status" value="1"/>
</dbReference>
<dbReference type="Gene3D" id="3.90.1150.10">
    <property type="entry name" value="Aspartate Aminotransferase, domain 1"/>
    <property type="match status" value="1"/>
</dbReference>
<dbReference type="Gene3D" id="3.40.640.10">
    <property type="entry name" value="Type I PLP-dependent aspartate aminotransferase-like (Major domain)"/>
    <property type="match status" value="1"/>
</dbReference>
<dbReference type="HAMAP" id="MF_01642">
    <property type="entry name" value="DapL_aminotrans_1"/>
    <property type="match status" value="1"/>
</dbReference>
<dbReference type="InterPro" id="IPR004839">
    <property type="entry name" value="Aminotransferase_I/II_large"/>
</dbReference>
<dbReference type="InterPro" id="IPR019942">
    <property type="entry name" value="DapL/ALD1"/>
</dbReference>
<dbReference type="InterPro" id="IPR015424">
    <property type="entry name" value="PyrdxlP-dep_Trfase"/>
</dbReference>
<dbReference type="InterPro" id="IPR015421">
    <property type="entry name" value="PyrdxlP-dep_Trfase_major"/>
</dbReference>
<dbReference type="InterPro" id="IPR015422">
    <property type="entry name" value="PyrdxlP-dep_Trfase_small"/>
</dbReference>
<dbReference type="NCBIfam" id="TIGR03542">
    <property type="entry name" value="DAPAT_plant"/>
    <property type="match status" value="1"/>
</dbReference>
<dbReference type="PANTHER" id="PTHR43144">
    <property type="entry name" value="AMINOTRANSFERASE"/>
    <property type="match status" value="1"/>
</dbReference>
<dbReference type="Pfam" id="PF00155">
    <property type="entry name" value="Aminotran_1_2"/>
    <property type="match status" value="1"/>
</dbReference>
<dbReference type="SUPFAM" id="SSF53383">
    <property type="entry name" value="PLP-dependent transferases"/>
    <property type="match status" value="1"/>
</dbReference>
<organism>
    <name type="scientific">Nostoc punctiforme (strain ATCC 29133 / PCC 73102)</name>
    <dbReference type="NCBI Taxonomy" id="63737"/>
    <lineage>
        <taxon>Bacteria</taxon>
        <taxon>Bacillati</taxon>
        <taxon>Cyanobacteriota</taxon>
        <taxon>Cyanophyceae</taxon>
        <taxon>Nostocales</taxon>
        <taxon>Nostocaceae</taxon>
        <taxon>Nostoc</taxon>
    </lineage>
</organism>
<proteinExistence type="inferred from homology"/>
<name>DAPAT_NOSP7</name>
<reference key="1">
    <citation type="journal article" date="2013" name="Plant Physiol.">
        <title>A Nostoc punctiforme Sugar Transporter Necessary to Establish a Cyanobacterium-Plant Symbiosis.</title>
        <authorList>
            <person name="Ekman M."/>
            <person name="Picossi S."/>
            <person name="Campbell E.L."/>
            <person name="Meeks J.C."/>
            <person name="Flores E."/>
        </authorList>
    </citation>
    <scope>NUCLEOTIDE SEQUENCE [LARGE SCALE GENOMIC DNA]</scope>
    <source>
        <strain>ATCC 29133 / PCC 73102</strain>
    </source>
</reference>